<dbReference type="EMBL" id="AY261360">
    <property type="status" value="NOT_ANNOTATED_CDS"/>
    <property type="molecule type" value="Genomic_DNA"/>
</dbReference>
<dbReference type="SMR" id="P0C9M5"/>
<dbReference type="Proteomes" id="UP000000861">
    <property type="component" value="Segment"/>
</dbReference>
<dbReference type="GO" id="GO:0042330">
    <property type="term" value="P:taxis"/>
    <property type="evidence" value="ECO:0007669"/>
    <property type="project" value="InterPro"/>
</dbReference>
<dbReference type="InterPro" id="IPR002595">
    <property type="entry name" value="ASFV_MGF360"/>
</dbReference>
<dbReference type="Pfam" id="PF01671">
    <property type="entry name" value="ASFV_360"/>
    <property type="match status" value="1"/>
</dbReference>
<name>3603L_ASFK5</name>
<comment type="function">
    <text evidence="1">Plays a role in virus cell tropism, and may be required for efficient virus replication in macrophages.</text>
</comment>
<comment type="similarity">
    <text evidence="2">Belongs to the asfivirus MGF 360 family.</text>
</comment>
<protein>
    <recommendedName>
        <fullName>Protein MGF 360-3L</fullName>
    </recommendedName>
</protein>
<proteinExistence type="inferred from homology"/>
<evidence type="ECO:0000250" key="1">
    <source>
        <dbReference type="UniProtKB" id="P23165"/>
    </source>
</evidence>
<evidence type="ECO:0000305" key="2"/>
<gene>
    <name type="ordered locus">Ken-006</name>
</gene>
<organismHost>
    <name type="scientific">Ornithodoros</name>
    <name type="common">relapsing fever ticks</name>
    <dbReference type="NCBI Taxonomy" id="6937"/>
</organismHost>
<organismHost>
    <name type="scientific">Phacochoerus aethiopicus</name>
    <name type="common">Warthog</name>
    <dbReference type="NCBI Taxonomy" id="85517"/>
</organismHost>
<organismHost>
    <name type="scientific">Phacochoerus africanus</name>
    <name type="common">Warthog</name>
    <dbReference type="NCBI Taxonomy" id="41426"/>
</organismHost>
<organismHost>
    <name type="scientific">Potamochoerus larvatus</name>
    <name type="common">Bushpig</name>
    <dbReference type="NCBI Taxonomy" id="273792"/>
</organismHost>
<organismHost>
    <name type="scientific">Sus scrofa</name>
    <name type="common">Pig</name>
    <dbReference type="NCBI Taxonomy" id="9823"/>
</organismHost>
<reference key="1">
    <citation type="submission" date="2003-03" db="EMBL/GenBank/DDBJ databases">
        <title>African swine fever virus genomes.</title>
        <authorList>
            <person name="Kutish G.F."/>
            <person name="Rock D.L."/>
        </authorList>
    </citation>
    <scope>NUCLEOTIDE SEQUENCE [LARGE SCALE GENOMIC DNA]</scope>
</reference>
<sequence length="355" mass="41567">MQPSTLQALTKRVLATQHVSNDDYCILKRFGLWWHDAPITLYTDGEQILIKTPCYKEGIKLNTALVLAVKENNYDLIVLFTEWGANINYALLSVNKEHTRNLCRKLGAKEGLEASEVLRFFFETKRHKTSSNIILCHELFSNNPFLQNVNMVELRMIIYWELKDLTTNLIVNEDSFTEMLTKYWYGIAVKYNLKEAIQYFCQEYEHLNEWRLICALSFNNVFDLHEICNTMNIDMNINKMMRLACMRDNNFLTIYYCFALGADINRAMYGSVSNFRIENMFFCMDLGADVFEESLELAERHGYSVIVDILSLKIYKANPILLSKETDPEKINTLLKNYYPKNMLAYDICNVDNYL</sequence>
<organism>
    <name type="scientific">African swine fever virus (isolate Pig/Kenya/KEN-50/1950)</name>
    <name type="common">ASFV</name>
    <dbReference type="NCBI Taxonomy" id="561445"/>
    <lineage>
        <taxon>Viruses</taxon>
        <taxon>Varidnaviria</taxon>
        <taxon>Bamfordvirae</taxon>
        <taxon>Nucleocytoviricota</taxon>
        <taxon>Pokkesviricetes</taxon>
        <taxon>Asfuvirales</taxon>
        <taxon>Asfarviridae</taxon>
        <taxon>Asfivirus</taxon>
        <taxon>African swine fever virus</taxon>
    </lineage>
</organism>
<accession>P0C9M5</accession>
<keyword id="KW-0040">ANK repeat</keyword>
<feature type="chain" id="PRO_0000373251" description="Protein MGF 360-3L">
    <location>
        <begin position="1"/>
        <end position="355"/>
    </location>
</feature>
<feature type="repeat" description="ANK">
    <location>
        <begin position="60"/>
        <end position="92"/>
    </location>
</feature>